<evidence type="ECO:0000250" key="1"/>
<evidence type="ECO:0000255" key="2">
    <source>
        <dbReference type="HAMAP-Rule" id="MF_01347"/>
    </source>
</evidence>
<comment type="function">
    <text evidence="2">Produces ATP from ADP in the presence of a proton gradient across the membrane. The catalytic sites are hosted primarily by the beta subunits.</text>
</comment>
<comment type="catalytic activity">
    <reaction evidence="2">
        <text>ATP + H2O + 4 H(+)(in) = ADP + phosphate + 5 H(+)(out)</text>
        <dbReference type="Rhea" id="RHEA:57720"/>
        <dbReference type="ChEBI" id="CHEBI:15377"/>
        <dbReference type="ChEBI" id="CHEBI:15378"/>
        <dbReference type="ChEBI" id="CHEBI:30616"/>
        <dbReference type="ChEBI" id="CHEBI:43474"/>
        <dbReference type="ChEBI" id="CHEBI:456216"/>
        <dbReference type="EC" id="7.1.2.2"/>
    </reaction>
</comment>
<comment type="subunit">
    <text evidence="2">F-type ATPases have 2 components, CF(1) - the catalytic core - and CF(0) - the membrane proton channel. CF(1) has five subunits: alpha(3), beta(3), gamma(1), delta(1), epsilon(1). CF(0) has four main subunits: a(1), b(1), b'(1) and c(9-12).</text>
</comment>
<comment type="subcellular location">
    <subcellularLocation>
        <location evidence="1">Plastid</location>
        <location evidence="1">Cyanelle thylakoid membrane</location>
        <topology evidence="2">Peripheral membrane protein</topology>
    </subcellularLocation>
</comment>
<comment type="similarity">
    <text evidence="2">Belongs to the ATPase alpha/beta chains family.</text>
</comment>
<accession>P48081</accession>
<reference key="1">
    <citation type="journal article" date="1995" name="Plant Mol. Biol. Rep.">
        <title>Nucleotide sequence of the cyanelle DNA from Cyanophora paradoxa.</title>
        <authorList>
            <person name="Stirewalt V.L."/>
            <person name="Michalowski C.B."/>
            <person name="Loeffelhardt W."/>
            <person name="Bohnert H.J."/>
            <person name="Bryant D.A."/>
        </authorList>
    </citation>
    <scope>NUCLEOTIDE SEQUENCE [LARGE SCALE GENOMIC DNA]</scope>
    <source>
        <strain>UTEX LB 555 / Pringsheim</strain>
    </source>
</reference>
<reference key="2">
    <citation type="book" date="1997" name="Eukaryotism and symbiosis">
        <title>The complete sequence of the cyanelle genome of Cyanophora paradoxa: the genetic complexity of a primitive plastid.</title>
        <editorList>
            <person name="Schenk H.E.A."/>
            <person name="Herrmann R."/>
            <person name="Jeon K.W."/>
            <person name="Mueller N.E."/>
            <person name="Schwemmler W."/>
        </editorList>
        <authorList>
            <person name="Loeffelhardt W."/>
            <person name="Stirewalt V.L."/>
            <person name="Michalowski C.B."/>
            <person name="Annarella M."/>
            <person name="Farley J.Y."/>
            <person name="Schluchter W.M."/>
            <person name="Chung S."/>
            <person name="Newmann-Spallart C."/>
            <person name="Steiner J.M."/>
            <person name="Jakowitsch J."/>
            <person name="Bohnert H.J."/>
            <person name="Bryant D.A."/>
        </authorList>
    </citation>
    <scope>NUCLEOTIDE SEQUENCE [LARGE SCALE GENOMIC DNA]</scope>
    <source>
        <strain>UTEX LB 555 / Pringsheim</strain>
    </source>
</reference>
<name>ATPB_CYAPA</name>
<organism>
    <name type="scientific">Cyanophora paradoxa</name>
    <dbReference type="NCBI Taxonomy" id="2762"/>
    <lineage>
        <taxon>Eukaryota</taxon>
        <taxon>Glaucocystophyceae</taxon>
        <taxon>Cyanophoraceae</taxon>
        <taxon>Cyanophora</taxon>
    </lineage>
</organism>
<gene>
    <name evidence="2" type="primary">atpB</name>
</gene>
<proteinExistence type="inferred from homology"/>
<protein>
    <recommendedName>
        <fullName evidence="2">ATP synthase subunit beta, cyanelle</fullName>
        <ecNumber evidence="2">7.1.2.2</ecNumber>
    </recommendedName>
    <alternativeName>
        <fullName evidence="2">ATP synthase F1 sector subunit beta</fullName>
    </alternativeName>
    <alternativeName>
        <fullName evidence="2">F-ATPase subunit beta</fullName>
    </alternativeName>
</protein>
<dbReference type="EC" id="7.1.2.2" evidence="2"/>
<dbReference type="EMBL" id="U30821">
    <property type="protein sequence ID" value="AAA81272.1"/>
    <property type="molecule type" value="Genomic_DNA"/>
</dbReference>
<dbReference type="PIR" id="T06929">
    <property type="entry name" value="T06929"/>
</dbReference>
<dbReference type="RefSeq" id="NP_043241.1">
    <property type="nucleotide sequence ID" value="NC_001675.1"/>
</dbReference>
<dbReference type="SMR" id="P48081"/>
<dbReference type="GeneID" id="801656"/>
<dbReference type="GO" id="GO:0033115">
    <property type="term" value="C:cyanelle thylakoid membrane"/>
    <property type="evidence" value="ECO:0007669"/>
    <property type="project" value="UniProtKB-SubCell"/>
</dbReference>
<dbReference type="GO" id="GO:0005739">
    <property type="term" value="C:mitochondrion"/>
    <property type="evidence" value="ECO:0007669"/>
    <property type="project" value="GOC"/>
</dbReference>
<dbReference type="GO" id="GO:0045259">
    <property type="term" value="C:proton-transporting ATP synthase complex"/>
    <property type="evidence" value="ECO:0007669"/>
    <property type="project" value="UniProtKB-KW"/>
</dbReference>
<dbReference type="GO" id="GO:0005524">
    <property type="term" value="F:ATP binding"/>
    <property type="evidence" value="ECO:0007669"/>
    <property type="project" value="UniProtKB-KW"/>
</dbReference>
<dbReference type="GO" id="GO:0016887">
    <property type="term" value="F:ATP hydrolysis activity"/>
    <property type="evidence" value="ECO:0007669"/>
    <property type="project" value="InterPro"/>
</dbReference>
<dbReference type="GO" id="GO:0046933">
    <property type="term" value="F:proton-transporting ATP synthase activity, rotational mechanism"/>
    <property type="evidence" value="ECO:0007669"/>
    <property type="project" value="InterPro"/>
</dbReference>
<dbReference type="GO" id="GO:0042776">
    <property type="term" value="P:proton motive force-driven mitochondrial ATP synthesis"/>
    <property type="evidence" value="ECO:0007669"/>
    <property type="project" value="TreeGrafter"/>
</dbReference>
<dbReference type="CDD" id="cd18110">
    <property type="entry name" value="ATP-synt_F1_beta_C"/>
    <property type="match status" value="1"/>
</dbReference>
<dbReference type="CDD" id="cd18115">
    <property type="entry name" value="ATP-synt_F1_beta_N"/>
    <property type="match status" value="1"/>
</dbReference>
<dbReference type="CDD" id="cd01133">
    <property type="entry name" value="F1-ATPase_beta_CD"/>
    <property type="match status" value="1"/>
</dbReference>
<dbReference type="FunFam" id="1.10.1140.10:FF:000001">
    <property type="entry name" value="ATP synthase subunit beta"/>
    <property type="match status" value="1"/>
</dbReference>
<dbReference type="FunFam" id="3.40.50.12240:FF:000006">
    <property type="entry name" value="ATP synthase subunit beta"/>
    <property type="match status" value="1"/>
</dbReference>
<dbReference type="FunFam" id="3.40.50.300:FF:000026">
    <property type="entry name" value="ATP synthase subunit beta"/>
    <property type="match status" value="1"/>
</dbReference>
<dbReference type="FunFam" id="2.40.10.170:FF:000002">
    <property type="entry name" value="ATP synthase subunit beta, chloroplastic"/>
    <property type="match status" value="1"/>
</dbReference>
<dbReference type="Gene3D" id="2.40.10.170">
    <property type="match status" value="1"/>
</dbReference>
<dbReference type="Gene3D" id="1.10.1140.10">
    <property type="entry name" value="Bovine Mitochondrial F1-atpase, Atp Synthase Beta Chain, Chain D, domain 3"/>
    <property type="match status" value="1"/>
</dbReference>
<dbReference type="Gene3D" id="3.40.50.300">
    <property type="entry name" value="P-loop containing nucleotide triphosphate hydrolases"/>
    <property type="match status" value="1"/>
</dbReference>
<dbReference type="HAMAP" id="MF_01347">
    <property type="entry name" value="ATP_synth_beta_bact"/>
    <property type="match status" value="1"/>
</dbReference>
<dbReference type="InterPro" id="IPR003593">
    <property type="entry name" value="AAA+_ATPase"/>
</dbReference>
<dbReference type="InterPro" id="IPR055190">
    <property type="entry name" value="ATP-synt_VA_C"/>
</dbReference>
<dbReference type="InterPro" id="IPR005722">
    <property type="entry name" value="ATP_synth_F1_bsu"/>
</dbReference>
<dbReference type="InterPro" id="IPR020003">
    <property type="entry name" value="ATPase_a/bsu_AS"/>
</dbReference>
<dbReference type="InterPro" id="IPR050053">
    <property type="entry name" value="ATPase_alpha/beta_chains"/>
</dbReference>
<dbReference type="InterPro" id="IPR004100">
    <property type="entry name" value="ATPase_F1/V1/A1_a/bsu_N"/>
</dbReference>
<dbReference type="InterPro" id="IPR036121">
    <property type="entry name" value="ATPase_F1/V1/A1_a/bsu_N_sf"/>
</dbReference>
<dbReference type="InterPro" id="IPR000194">
    <property type="entry name" value="ATPase_F1/V1/A1_a/bsu_nucl-bd"/>
</dbReference>
<dbReference type="InterPro" id="IPR024034">
    <property type="entry name" value="ATPase_F1/V1_b/a_C"/>
</dbReference>
<dbReference type="InterPro" id="IPR027417">
    <property type="entry name" value="P-loop_NTPase"/>
</dbReference>
<dbReference type="NCBIfam" id="TIGR01039">
    <property type="entry name" value="atpD"/>
    <property type="match status" value="1"/>
</dbReference>
<dbReference type="PANTHER" id="PTHR15184">
    <property type="entry name" value="ATP SYNTHASE"/>
    <property type="match status" value="1"/>
</dbReference>
<dbReference type="PANTHER" id="PTHR15184:SF71">
    <property type="entry name" value="ATP SYNTHASE SUBUNIT BETA, MITOCHONDRIAL"/>
    <property type="match status" value="1"/>
</dbReference>
<dbReference type="Pfam" id="PF00006">
    <property type="entry name" value="ATP-synt_ab"/>
    <property type="match status" value="1"/>
</dbReference>
<dbReference type="Pfam" id="PF02874">
    <property type="entry name" value="ATP-synt_ab_N"/>
    <property type="match status" value="1"/>
</dbReference>
<dbReference type="Pfam" id="PF22919">
    <property type="entry name" value="ATP-synt_VA_C"/>
    <property type="match status" value="1"/>
</dbReference>
<dbReference type="SMART" id="SM00382">
    <property type="entry name" value="AAA"/>
    <property type="match status" value="1"/>
</dbReference>
<dbReference type="SUPFAM" id="SSF47917">
    <property type="entry name" value="C-terminal domain of alpha and beta subunits of F1 ATP synthase"/>
    <property type="match status" value="1"/>
</dbReference>
<dbReference type="SUPFAM" id="SSF50615">
    <property type="entry name" value="N-terminal domain of alpha and beta subunits of F1 ATP synthase"/>
    <property type="match status" value="1"/>
</dbReference>
<dbReference type="SUPFAM" id="SSF52540">
    <property type="entry name" value="P-loop containing nucleoside triphosphate hydrolases"/>
    <property type="match status" value="1"/>
</dbReference>
<dbReference type="PROSITE" id="PS00152">
    <property type="entry name" value="ATPASE_ALPHA_BETA"/>
    <property type="match status" value="1"/>
</dbReference>
<feature type="chain" id="PRO_0000144489" description="ATP synthase subunit beta, cyanelle">
    <location>
        <begin position="1"/>
        <end position="485"/>
    </location>
</feature>
<feature type="binding site" evidence="2">
    <location>
        <begin position="162"/>
        <end position="169"/>
    </location>
    <ligand>
        <name>ATP</name>
        <dbReference type="ChEBI" id="CHEBI:30616"/>
    </ligand>
</feature>
<keyword id="KW-0066">ATP synthesis</keyword>
<keyword id="KW-0067">ATP-binding</keyword>
<keyword id="KW-0139">CF(1)</keyword>
<keyword id="KW-0194">Cyanelle</keyword>
<keyword id="KW-0375">Hydrogen ion transport</keyword>
<keyword id="KW-0406">Ion transport</keyword>
<keyword id="KW-0472">Membrane</keyword>
<keyword id="KW-0547">Nucleotide-binding</keyword>
<keyword id="KW-0934">Plastid</keyword>
<keyword id="KW-0793">Thylakoid</keyword>
<keyword id="KW-1278">Translocase</keyword>
<keyword id="KW-0813">Transport</keyword>
<geneLocation type="cyanelle"/>
<sequence>MATTTSKTNTGYVTQVIGPVLDVSFPNGQLPKIYNAITVKGKNEAGQDITVTCEVQQLLGDNQVRAVSMSTTDGILRGMEVTDSGAAISVPVGTPTLGRIFNVLGEPVDELGAVVCDSTLPIHRPSPAFTQLETKSSIFETGIKVVDLLAPYRRGGKIGLFGGAGVGKTVLIMELINNIAKAHGGVSVFGGVGERTREGNDLYQEMKESKVIDENNLPASKVALVYGQMNEPPGARMRVALTALTMAEYFRDVNNQDVLLFIDNIFRFVQAGSEVSALLGRMPSAVGYQPTLGTEMGSLQERITSTTKGSITSIQAVYVPADDLTDPAPATTFAHLDATTVLSRNLAAKGIYPAVDPLDSTSTMLQPGIVGEKHYACAQRVKGILQRYKELQDIISILGLDELSEDDRLAVARARRVERFLSQPFFVAEVFTGSPGKYVSLEDTIKGFTMILDGELDELPEQSFYLVGDIQEAISKGQKLLAEAK</sequence>